<reference key="1">
    <citation type="journal article" date="2008" name="PLoS ONE">
        <title>Environmental adaptation: genomic analysis of the piezotolerant and psychrotolerant deep-sea iron reducing bacterium Shewanella piezotolerans WP3.</title>
        <authorList>
            <person name="Wang F."/>
            <person name="Wang J."/>
            <person name="Jian H."/>
            <person name="Zhang B."/>
            <person name="Li S."/>
            <person name="Wang F."/>
            <person name="Zeng X."/>
            <person name="Gao L."/>
            <person name="Bartlett D.H."/>
            <person name="Yu J."/>
            <person name="Hu S."/>
            <person name="Xiao X."/>
        </authorList>
    </citation>
    <scope>NUCLEOTIDE SEQUENCE [LARGE SCALE GENOMIC DNA]</scope>
    <source>
        <strain>WP3 / JCM 13877</strain>
    </source>
</reference>
<keyword id="KW-0028">Amino-acid biosynthesis</keyword>
<keyword id="KW-0057">Aromatic amino acid biosynthesis</keyword>
<keyword id="KW-0963">Cytoplasm</keyword>
<keyword id="KW-0808">Transferase</keyword>
<dbReference type="EC" id="2.5.1.19" evidence="1"/>
<dbReference type="EMBL" id="CP000472">
    <property type="protein sequence ID" value="ACJ29229.1"/>
    <property type="molecule type" value="Genomic_DNA"/>
</dbReference>
<dbReference type="RefSeq" id="WP_020912587.1">
    <property type="nucleotide sequence ID" value="NC_011566.1"/>
</dbReference>
<dbReference type="SMR" id="B8CMH2"/>
<dbReference type="STRING" id="225849.swp_2488"/>
<dbReference type="KEGG" id="swp:swp_2488"/>
<dbReference type="eggNOG" id="COG0128">
    <property type="taxonomic scope" value="Bacteria"/>
</dbReference>
<dbReference type="HOGENOM" id="CLU_024321_0_0_6"/>
<dbReference type="OrthoDB" id="9809920at2"/>
<dbReference type="UniPathway" id="UPA00053">
    <property type="reaction ID" value="UER00089"/>
</dbReference>
<dbReference type="Proteomes" id="UP000000753">
    <property type="component" value="Chromosome"/>
</dbReference>
<dbReference type="GO" id="GO:0005737">
    <property type="term" value="C:cytoplasm"/>
    <property type="evidence" value="ECO:0007669"/>
    <property type="project" value="UniProtKB-SubCell"/>
</dbReference>
<dbReference type="GO" id="GO:0003866">
    <property type="term" value="F:3-phosphoshikimate 1-carboxyvinyltransferase activity"/>
    <property type="evidence" value="ECO:0007669"/>
    <property type="project" value="UniProtKB-UniRule"/>
</dbReference>
<dbReference type="GO" id="GO:0008652">
    <property type="term" value="P:amino acid biosynthetic process"/>
    <property type="evidence" value="ECO:0007669"/>
    <property type="project" value="UniProtKB-KW"/>
</dbReference>
<dbReference type="GO" id="GO:0009073">
    <property type="term" value="P:aromatic amino acid family biosynthetic process"/>
    <property type="evidence" value="ECO:0007669"/>
    <property type="project" value="UniProtKB-KW"/>
</dbReference>
<dbReference type="GO" id="GO:0009423">
    <property type="term" value="P:chorismate biosynthetic process"/>
    <property type="evidence" value="ECO:0007669"/>
    <property type="project" value="UniProtKB-UniRule"/>
</dbReference>
<dbReference type="CDD" id="cd01556">
    <property type="entry name" value="EPSP_synthase"/>
    <property type="match status" value="1"/>
</dbReference>
<dbReference type="FunFam" id="3.65.10.10:FF:000003">
    <property type="entry name" value="3-phosphoshikimate 1-carboxyvinyltransferase"/>
    <property type="match status" value="1"/>
</dbReference>
<dbReference type="FunFam" id="3.65.10.10:FF:000004">
    <property type="entry name" value="3-phosphoshikimate 1-carboxyvinyltransferase"/>
    <property type="match status" value="1"/>
</dbReference>
<dbReference type="Gene3D" id="3.65.10.10">
    <property type="entry name" value="Enolpyruvate transferase domain"/>
    <property type="match status" value="2"/>
</dbReference>
<dbReference type="HAMAP" id="MF_00210">
    <property type="entry name" value="EPSP_synth"/>
    <property type="match status" value="1"/>
</dbReference>
<dbReference type="InterPro" id="IPR001986">
    <property type="entry name" value="Enolpyruvate_Tfrase_dom"/>
</dbReference>
<dbReference type="InterPro" id="IPR036968">
    <property type="entry name" value="Enolpyruvate_Tfrase_sf"/>
</dbReference>
<dbReference type="InterPro" id="IPR006264">
    <property type="entry name" value="EPSP_synthase"/>
</dbReference>
<dbReference type="InterPro" id="IPR023193">
    <property type="entry name" value="EPSP_synthase_CS"/>
</dbReference>
<dbReference type="InterPro" id="IPR013792">
    <property type="entry name" value="RNA3'P_cycl/enolpyr_Trfase_a/b"/>
</dbReference>
<dbReference type="NCBIfam" id="TIGR01356">
    <property type="entry name" value="aroA"/>
    <property type="match status" value="1"/>
</dbReference>
<dbReference type="PANTHER" id="PTHR21090">
    <property type="entry name" value="AROM/DEHYDROQUINATE SYNTHASE"/>
    <property type="match status" value="1"/>
</dbReference>
<dbReference type="PANTHER" id="PTHR21090:SF5">
    <property type="entry name" value="PENTAFUNCTIONAL AROM POLYPEPTIDE"/>
    <property type="match status" value="1"/>
</dbReference>
<dbReference type="Pfam" id="PF00275">
    <property type="entry name" value="EPSP_synthase"/>
    <property type="match status" value="1"/>
</dbReference>
<dbReference type="PIRSF" id="PIRSF000505">
    <property type="entry name" value="EPSPS"/>
    <property type="match status" value="1"/>
</dbReference>
<dbReference type="SUPFAM" id="SSF55205">
    <property type="entry name" value="EPT/RTPC-like"/>
    <property type="match status" value="1"/>
</dbReference>
<dbReference type="PROSITE" id="PS00104">
    <property type="entry name" value="EPSP_SYNTHASE_1"/>
    <property type="match status" value="1"/>
</dbReference>
<dbReference type="PROSITE" id="PS00885">
    <property type="entry name" value="EPSP_SYNTHASE_2"/>
    <property type="match status" value="1"/>
</dbReference>
<comment type="function">
    <text evidence="1">Catalyzes the transfer of the enolpyruvyl moiety of phosphoenolpyruvate (PEP) to the 5-hydroxyl of shikimate-3-phosphate (S3P) to produce enolpyruvyl shikimate-3-phosphate and inorganic phosphate.</text>
</comment>
<comment type="catalytic activity">
    <reaction evidence="1">
        <text>3-phosphoshikimate + phosphoenolpyruvate = 5-O-(1-carboxyvinyl)-3-phosphoshikimate + phosphate</text>
        <dbReference type="Rhea" id="RHEA:21256"/>
        <dbReference type="ChEBI" id="CHEBI:43474"/>
        <dbReference type="ChEBI" id="CHEBI:57701"/>
        <dbReference type="ChEBI" id="CHEBI:58702"/>
        <dbReference type="ChEBI" id="CHEBI:145989"/>
        <dbReference type="EC" id="2.5.1.19"/>
    </reaction>
    <physiologicalReaction direction="left-to-right" evidence="1">
        <dbReference type="Rhea" id="RHEA:21257"/>
    </physiologicalReaction>
</comment>
<comment type="pathway">
    <text evidence="1">Metabolic intermediate biosynthesis; chorismate biosynthesis; chorismate from D-erythrose 4-phosphate and phosphoenolpyruvate: step 6/7.</text>
</comment>
<comment type="subunit">
    <text evidence="1">Monomer.</text>
</comment>
<comment type="subcellular location">
    <subcellularLocation>
        <location evidence="1">Cytoplasm</location>
    </subcellularLocation>
</comment>
<comment type="similarity">
    <text evidence="1">Belongs to the EPSP synthase family.</text>
</comment>
<organism>
    <name type="scientific">Shewanella piezotolerans (strain WP3 / JCM 13877)</name>
    <dbReference type="NCBI Taxonomy" id="225849"/>
    <lineage>
        <taxon>Bacteria</taxon>
        <taxon>Pseudomonadati</taxon>
        <taxon>Pseudomonadota</taxon>
        <taxon>Gammaproteobacteria</taxon>
        <taxon>Alteromonadales</taxon>
        <taxon>Shewanellaceae</taxon>
        <taxon>Shewanella</taxon>
    </lineage>
</organism>
<name>AROA_SHEPW</name>
<evidence type="ECO:0000255" key="1">
    <source>
        <dbReference type="HAMAP-Rule" id="MF_00210"/>
    </source>
</evidence>
<feature type="chain" id="PRO_1000189566" description="3-phosphoshikimate 1-carboxyvinyltransferase">
    <location>
        <begin position="1"/>
        <end position="426"/>
    </location>
</feature>
<feature type="active site" description="Proton acceptor" evidence="1">
    <location>
        <position position="314"/>
    </location>
</feature>
<feature type="binding site" evidence="1">
    <location>
        <position position="22"/>
    </location>
    <ligand>
        <name>3-phosphoshikimate</name>
        <dbReference type="ChEBI" id="CHEBI:145989"/>
    </ligand>
</feature>
<feature type="binding site" evidence="1">
    <location>
        <position position="22"/>
    </location>
    <ligand>
        <name>phosphoenolpyruvate</name>
        <dbReference type="ChEBI" id="CHEBI:58702"/>
    </ligand>
</feature>
<feature type="binding site" evidence="1">
    <location>
        <position position="23"/>
    </location>
    <ligand>
        <name>3-phosphoshikimate</name>
        <dbReference type="ChEBI" id="CHEBI:145989"/>
    </ligand>
</feature>
<feature type="binding site" evidence="1">
    <location>
        <position position="27"/>
    </location>
    <ligand>
        <name>3-phosphoshikimate</name>
        <dbReference type="ChEBI" id="CHEBI:145989"/>
    </ligand>
</feature>
<feature type="binding site" evidence="1">
    <location>
        <position position="96"/>
    </location>
    <ligand>
        <name>phosphoenolpyruvate</name>
        <dbReference type="ChEBI" id="CHEBI:58702"/>
    </ligand>
</feature>
<feature type="binding site" evidence="1">
    <location>
        <position position="124"/>
    </location>
    <ligand>
        <name>phosphoenolpyruvate</name>
        <dbReference type="ChEBI" id="CHEBI:58702"/>
    </ligand>
</feature>
<feature type="binding site" evidence="1">
    <location>
        <position position="170"/>
    </location>
    <ligand>
        <name>3-phosphoshikimate</name>
        <dbReference type="ChEBI" id="CHEBI:145989"/>
    </ligand>
</feature>
<feature type="binding site" evidence="1">
    <location>
        <position position="171"/>
    </location>
    <ligand>
        <name>3-phosphoshikimate</name>
        <dbReference type="ChEBI" id="CHEBI:145989"/>
    </ligand>
</feature>
<feature type="binding site" evidence="1">
    <location>
        <position position="172"/>
    </location>
    <ligand>
        <name>3-phosphoshikimate</name>
        <dbReference type="ChEBI" id="CHEBI:145989"/>
    </ligand>
</feature>
<feature type="binding site" evidence="1">
    <location>
        <position position="172"/>
    </location>
    <ligand>
        <name>phosphoenolpyruvate</name>
        <dbReference type="ChEBI" id="CHEBI:58702"/>
    </ligand>
</feature>
<feature type="binding site" evidence="1">
    <location>
        <position position="198"/>
    </location>
    <ligand>
        <name>3-phosphoshikimate</name>
        <dbReference type="ChEBI" id="CHEBI:145989"/>
    </ligand>
</feature>
<feature type="binding site" evidence="1">
    <location>
        <position position="314"/>
    </location>
    <ligand>
        <name>3-phosphoshikimate</name>
        <dbReference type="ChEBI" id="CHEBI:145989"/>
    </ligand>
</feature>
<feature type="binding site" evidence="1">
    <location>
        <position position="337"/>
    </location>
    <ligand>
        <name>3-phosphoshikimate</name>
        <dbReference type="ChEBI" id="CHEBI:145989"/>
    </ligand>
</feature>
<feature type="binding site" evidence="1">
    <location>
        <position position="341"/>
    </location>
    <ligand>
        <name>3-phosphoshikimate</name>
        <dbReference type="ChEBI" id="CHEBI:145989"/>
    </ligand>
</feature>
<feature type="binding site" evidence="1">
    <location>
        <position position="345"/>
    </location>
    <ligand>
        <name>phosphoenolpyruvate</name>
        <dbReference type="ChEBI" id="CHEBI:58702"/>
    </ligand>
</feature>
<feature type="binding site" evidence="1">
    <location>
        <position position="387"/>
    </location>
    <ligand>
        <name>phosphoenolpyruvate</name>
        <dbReference type="ChEBI" id="CHEBI:58702"/>
    </ligand>
</feature>
<feature type="binding site" evidence="1">
    <location>
        <position position="412"/>
    </location>
    <ligand>
        <name>phosphoenolpyruvate</name>
        <dbReference type="ChEBI" id="CHEBI:58702"/>
    </ligand>
</feature>
<protein>
    <recommendedName>
        <fullName evidence="1">3-phosphoshikimate 1-carboxyvinyltransferase</fullName>
        <ecNumber evidence="1">2.5.1.19</ecNumber>
    </recommendedName>
    <alternativeName>
        <fullName evidence="1">5-enolpyruvylshikimate-3-phosphate synthase</fullName>
        <shortName evidence="1">EPSP synthase</shortName>
        <shortName evidence="1">EPSPS</shortName>
    </alternativeName>
</protein>
<sequence length="426" mass="45684">MNQLRLEPIEKVNGTINIPGSKSISNRALLLATLAEGTTTLTNLLDSDDIRYMLASLKQLGVNYRLTNNNTVCEVDGIAGVLNADTAQTLFLGNAGTAMRPLCAALTLGQGEFTLTGEPRMEERPIGDLVDSLRQLGADVSYLKNDGFPPLTINATGLSGGDVEIAGDLSSQFLTALLMVAPLAKGDVNIKIKGELVSKPYIDITLALMAQFGVNVTNNNYVSFEIKTGQRYISPGKLLVEGDASSASYFLAAGAIKGGEVKVTGVGKLSIQGDVKFADVLAQMGADIEWGDDYIIARGSKLNAVDLDMNHIPDAAMTIATAALFATGTTHIRNIYNWRIKETDRLAAMATELRKVGAIVDEGHDYISVTPPVKPHTANIDTYNDHRMAMCFSMLAFADCGITINEPECTSKTFPDYFTQFNALAN</sequence>
<gene>
    <name evidence="1" type="primary">aroA</name>
    <name type="ordered locus">swp_2488</name>
</gene>
<accession>B8CMH2</accession>
<proteinExistence type="inferred from homology"/>